<comment type="function">
    <text evidence="1">Transcription factor that may regulate root development.</text>
</comment>
<comment type="subunit">
    <text evidence="1">Homodimer.</text>
</comment>
<comment type="interaction">
    <interactant intactId="EBI-15197899">
        <id>Q58G01</id>
    </interactant>
    <interactant intactId="EBI-15194247">
        <id>Q9FY69</id>
        <label>BHLH143</label>
    </interactant>
    <organismsDiffer>false</organismsDiffer>
    <experiments>3</experiments>
</comment>
<comment type="interaction">
    <interactant intactId="EBI-15197899">
        <id>Q58G01</id>
    </interactant>
    <interactant intactId="EBI-4477059">
        <id>Q9FGB0</id>
        <label>BHLH145</label>
    </interactant>
    <organismsDiffer>false</organismsDiffer>
    <experiments>3</experiments>
</comment>
<comment type="interaction">
    <interactant intactId="EBI-15197899">
        <id>Q58G01</id>
    </interactant>
    <interactant intactId="EBI-15192637">
        <id>Q9C7T4</id>
        <label>BHLH96</label>
    </interactant>
    <organismsDiffer>false</organismsDiffer>
    <experiments>3</experiments>
</comment>
<comment type="subcellular location">
    <subcellularLocation>
        <location evidence="2">Nucleus</location>
    </subcellularLocation>
</comment>
<comment type="alternative products">
    <event type="alternative splicing"/>
    <isoform>
        <id>Q58G01-1</id>
        <name>1</name>
        <sequence type="displayed"/>
    </isoform>
    <isoform>
        <id>Q58G01-2</id>
        <name>2</name>
        <sequence type="described" ref="VSP_043890 VSP_043891 VSP_043892 VSP_043893 VSP_043895"/>
    </isoform>
    <isoform>
        <id>Q58G01-3</id>
        <name>3</name>
        <sequence type="described" ref="VSP_043894"/>
    </isoform>
</comment>
<comment type="similarity">
    <text evidence="5">Belongs to the bHLH protein family. LHW subfamily.</text>
</comment>
<comment type="sequence caution" evidence="5">
    <conflict type="erroneous initiation">
        <sequence resource="EMBL-CDS" id="BAD94375"/>
    </conflict>
    <text>Truncated N-terminus.</text>
</comment>
<reference key="1">
    <citation type="journal article" date="2003" name="Plant Cell">
        <title>Update on the basic helix-loop-helix transcription factor gene family in Arabidopsis thaliana.</title>
        <authorList>
            <person name="Bailey P.C."/>
            <person name="Martin C."/>
            <person name="Toledo-Ortiz G."/>
            <person name="Quail P.H."/>
            <person name="Huq E."/>
            <person name="Heim M.A."/>
            <person name="Jakoby M."/>
            <person name="Werber M."/>
            <person name="Weisshaar B."/>
        </authorList>
    </citation>
    <scope>NUCLEOTIDE SEQUENCE [MRNA] (ISOFORM 2)</scope>
    <scope>GENE FAMILY</scope>
    <scope>NOMENCLATURE</scope>
</reference>
<reference key="2">
    <citation type="journal article" date="1999" name="Nature">
        <title>Sequence and analysis of chromosome 2 of the plant Arabidopsis thaliana.</title>
        <authorList>
            <person name="Lin X."/>
            <person name="Kaul S."/>
            <person name="Rounsley S.D."/>
            <person name="Shea T.P."/>
            <person name="Benito M.-I."/>
            <person name="Town C.D."/>
            <person name="Fujii C.Y."/>
            <person name="Mason T.M."/>
            <person name="Bowman C.L."/>
            <person name="Barnstead M.E."/>
            <person name="Feldblyum T.V."/>
            <person name="Buell C.R."/>
            <person name="Ketchum K.A."/>
            <person name="Lee J.J."/>
            <person name="Ronning C.M."/>
            <person name="Koo H.L."/>
            <person name="Moffat K.S."/>
            <person name="Cronin L.A."/>
            <person name="Shen M."/>
            <person name="Pai G."/>
            <person name="Van Aken S."/>
            <person name="Umayam L."/>
            <person name="Tallon L.J."/>
            <person name="Gill J.E."/>
            <person name="Adams M.D."/>
            <person name="Carrera A.J."/>
            <person name="Creasy T.H."/>
            <person name="Goodman H.M."/>
            <person name="Somerville C.R."/>
            <person name="Copenhaver G.P."/>
            <person name="Preuss D."/>
            <person name="Nierman W.C."/>
            <person name="White O."/>
            <person name="Eisen J.A."/>
            <person name="Salzberg S.L."/>
            <person name="Fraser C.M."/>
            <person name="Venter J.C."/>
        </authorList>
    </citation>
    <scope>NUCLEOTIDE SEQUENCE [LARGE SCALE GENOMIC DNA]</scope>
    <source>
        <strain>cv. Columbia</strain>
    </source>
</reference>
<reference key="3">
    <citation type="journal article" date="2017" name="Plant J.">
        <title>Araport11: a complete reannotation of the Arabidopsis thaliana reference genome.</title>
        <authorList>
            <person name="Cheng C.Y."/>
            <person name="Krishnakumar V."/>
            <person name="Chan A.P."/>
            <person name="Thibaud-Nissen F."/>
            <person name="Schobel S."/>
            <person name="Town C.D."/>
        </authorList>
    </citation>
    <scope>GENOME REANNOTATION</scope>
    <source>
        <strain>cv. Columbia</strain>
    </source>
</reference>
<reference key="4">
    <citation type="journal article" date="2002" name="Plant Physiol.">
        <title>Cloning and sequencing of cDNAs for hypothetical genes from chromosome 2 of Arabidopsis.</title>
        <authorList>
            <person name="Xiao Y.-L."/>
            <person name="Malik M."/>
            <person name="Whitelaw C.A."/>
            <person name="Town C.D."/>
        </authorList>
    </citation>
    <scope>NUCLEOTIDE SEQUENCE [LARGE SCALE MRNA] (ISOFORM 1)</scope>
    <source>
        <strain>cv. Columbia</strain>
    </source>
</reference>
<reference key="5">
    <citation type="submission" date="2005-03" db="EMBL/GenBank/DDBJ databases">
        <authorList>
            <person name="Underwood B.A."/>
            <person name="Xiao Y.-L."/>
            <person name="Moskal W.A. Jr."/>
            <person name="Monaghan E.L."/>
            <person name="Wang W."/>
            <person name="Redman J.C."/>
            <person name="Wu H.C."/>
            <person name="Utterback T."/>
            <person name="Town C.D."/>
        </authorList>
    </citation>
    <scope>NUCLEOTIDE SEQUENCE [LARGE SCALE MRNA] (ISOFORM 1)</scope>
    <source>
        <strain>cv. Columbia</strain>
    </source>
</reference>
<reference key="6">
    <citation type="submission" date="2005-03" db="EMBL/GenBank/DDBJ databases">
        <title>Large-scale analysis of RIKEN Arabidopsis full-length (RAFL) cDNAs.</title>
        <authorList>
            <person name="Totoki Y."/>
            <person name="Seki M."/>
            <person name="Ishida J."/>
            <person name="Nakajima M."/>
            <person name="Enju A."/>
            <person name="Kamiya A."/>
            <person name="Narusaka M."/>
            <person name="Shin-i T."/>
            <person name="Nakagawa M."/>
            <person name="Sakamoto N."/>
            <person name="Oishi K."/>
            <person name="Kohara Y."/>
            <person name="Kobayashi M."/>
            <person name="Toyoda A."/>
            <person name="Sakaki Y."/>
            <person name="Sakurai T."/>
            <person name="Iida K."/>
            <person name="Akiyama K."/>
            <person name="Satou M."/>
            <person name="Toyoda T."/>
            <person name="Konagaya A."/>
            <person name="Carninci P."/>
            <person name="Kawai J."/>
            <person name="Hayashizaki Y."/>
            <person name="Shinozaki K."/>
        </authorList>
    </citation>
    <scope>NUCLEOTIDE SEQUENCE [LARGE SCALE MRNA] OF 452-720 (ISOFORM 1)</scope>
    <source>
        <strain>cv. Columbia</strain>
    </source>
</reference>
<reference key="7">
    <citation type="journal article" date="2007" name="Development">
        <title>Regulation of the Arabidopsis root vascular initial population by LONESOME HIGHWAY.</title>
        <authorList>
            <person name="Ohashi-Ito K."/>
            <person name="Bergmann D.C."/>
        </authorList>
    </citation>
    <scope>GENE FAMILY</scope>
</reference>
<gene>
    <name type="primary">BHLH155</name>
    <name type="ordered locus">At2g31280</name>
    <name type="ORF">F16D14.12</name>
</gene>
<proteinExistence type="evidence at protein level"/>
<evidence type="ECO:0000250" key="1"/>
<evidence type="ECO:0000255" key="2">
    <source>
        <dbReference type="PROSITE-ProRule" id="PRU00981"/>
    </source>
</evidence>
<evidence type="ECO:0000256" key="3">
    <source>
        <dbReference type="SAM" id="MobiDB-lite"/>
    </source>
</evidence>
<evidence type="ECO:0000303" key="4">
    <source>
    </source>
</evidence>
<evidence type="ECO:0000305" key="5"/>
<organism>
    <name type="scientific">Arabidopsis thaliana</name>
    <name type="common">Mouse-ear cress</name>
    <dbReference type="NCBI Taxonomy" id="3702"/>
    <lineage>
        <taxon>Eukaryota</taxon>
        <taxon>Viridiplantae</taxon>
        <taxon>Streptophyta</taxon>
        <taxon>Embryophyta</taxon>
        <taxon>Tracheophyta</taxon>
        <taxon>Spermatophyta</taxon>
        <taxon>Magnoliopsida</taxon>
        <taxon>eudicotyledons</taxon>
        <taxon>Gunneridae</taxon>
        <taxon>Pentapetalae</taxon>
        <taxon>rosids</taxon>
        <taxon>malvids</taxon>
        <taxon>Brassicales</taxon>
        <taxon>Brassicaceae</taxon>
        <taxon>Camelineae</taxon>
        <taxon>Arabidopsis</taxon>
    </lineage>
</organism>
<keyword id="KW-0025">Alternative splicing</keyword>
<keyword id="KW-0217">Developmental protein</keyword>
<keyword id="KW-0238">DNA-binding</keyword>
<keyword id="KW-0539">Nucleus</keyword>
<keyword id="KW-1185">Reference proteome</keyword>
<keyword id="KW-0804">Transcription</keyword>
<keyword id="KW-0805">Transcription regulation</keyword>
<sequence length="720" mass="79809">MGSTSQEILKSFCFNTDWDYAVFWQLNHRGSRMVLTLEDAYYDHHGTNMHGAHDPLGLAVAKMSYHVYSLGEGIVGQVAVSGEHQWVFPENYNNCNSAFEFHNVWESQISAGIKTILVVAVGPCGVVQLGSLCKVNEDVNFVNHIRHLFLALRDPLADHAANLRQCNMNNSLCLPKMPSEGLHAEAFPDCSGEVDKAMDVEESNILTQYKTRRSDSMPYNTPSSCLVMEKAAQVVGGREVVQGSTCGSYSGVTFGFPVDLVGAKHENQVGTNIIRDAPHVGMTSGCKDSRDLDPNLHLYMKNHVLNDTSTSALAIEAERLITSQSYPRLDSTFQATSRTDKESSYHNEVFQLSENQGNKYIKETERMLGRNCESSQFDALISSGYTFAGSELLEALGSAFKQTNTGQEELLKSEHGSTMRPTDDMSHSQLTFDPGPENLLDAVVANVCQRDGNARDDMMSSRSVQSLLTNMELAEPSGQKKHNIVNPINSAMNQPPMAEVDTQQNSSDICGAFSSIGFSSTYPSSSSDQFQTSLDIPKKNKKRAKPGESSRPRPRDRQLIQDRIKELRELVPNGSKCSIDSLLERTIKHMLFLQNVTKHAEKLSKSANEKMQQKETGMQGSSCAVEVGGHLQVSSIIVENLNKQGMVLIEMLCEECGHFLEIANVIRSLDLVILRGFTETQGEKTWICFVTESQNSKVMQRMDILWSLVQIFQPKANEKG</sequence>
<feature type="chain" id="PRO_0000417699" description="Transcription factor bHLH155">
    <location>
        <begin position="1"/>
        <end position="720"/>
    </location>
</feature>
<feature type="domain" description="bHLH" evidence="2">
    <location>
        <begin position="544"/>
        <end position="593"/>
    </location>
</feature>
<feature type="region of interest" description="Disordered" evidence="3">
    <location>
        <begin position="522"/>
        <end position="558"/>
    </location>
</feature>
<feature type="short sequence motif" description="Nuclear localization signal" evidence="1">
    <location>
        <begin position="540"/>
        <end position="547"/>
    </location>
</feature>
<feature type="compositionally biased region" description="Polar residues" evidence="3">
    <location>
        <begin position="522"/>
        <end position="534"/>
    </location>
</feature>
<feature type="compositionally biased region" description="Basic and acidic residues" evidence="3">
    <location>
        <begin position="545"/>
        <end position="558"/>
    </location>
</feature>
<feature type="splice variant" id="VSP_043890" description="In isoform 2." evidence="4">
    <original>STSQ</original>
    <variation>KRQISQDEVGPPIKPRAGLRREQAGRGSYR</variation>
    <location>
        <begin position="3"/>
        <end position="6"/>
    </location>
</feature>
<feature type="splice variant" id="VSP_043891" description="In isoform 2." evidence="4">
    <location>
        <begin position="101"/>
        <end position="114"/>
    </location>
</feature>
<feature type="splice variant" id="VSP_043892" description="In isoform 2." evidence="4">
    <original>CKVNEDVNFVNHIRHLFLALRDPLADHAANLRQCNMNNSLCL</original>
    <variation>CK</variation>
    <location>
        <begin position="133"/>
        <end position="174"/>
    </location>
</feature>
<feature type="splice variant" id="VSP_043893" description="In isoform 2." evidence="4">
    <original>E</original>
    <variation>EFNLCLNSSPKFCECVLKVFLGIGQ</variation>
    <location>
        <position position="650"/>
    </location>
</feature>
<feature type="splice variant" id="VSP_043894" description="In isoform 3." evidence="5">
    <original>E</original>
    <variation>EVGSRITQFMKEIPKQIK</variation>
    <location>
        <position position="692"/>
    </location>
</feature>
<feature type="splice variant" id="VSP_043895" description="In isoform 2." evidence="4">
    <original>SQNSKVMQRMDILWSLVQIFQPKANEKG</original>
    <variation>VGSRITQFMKEIPKQIKVFSLVLIELWISMIYMTD</variation>
    <location>
        <begin position="693"/>
        <end position="720"/>
    </location>
</feature>
<feature type="sequence conflict" description="In Ref. 4; AAM97767." evidence="5" ref="4">
    <original>Q</original>
    <variation>L</variation>
    <location>
        <position position="612"/>
    </location>
</feature>
<feature type="sequence conflict" description="In Ref. 4; AAM97767." evidence="5" ref="4">
    <original>Q</original>
    <variation>H</variation>
    <location>
        <position position="644"/>
    </location>
</feature>
<accession>Q58G01</accession>
<accession>F4IQS0</accession>
<accession>Q56WU6</accession>
<accession>Q84RJ4</accession>
<accession>Q8L7J0</accession>
<accession>Q9SJW8</accession>
<name>LHWL3_ARATH</name>
<protein>
    <recommendedName>
        <fullName>Transcription factor bHLH155</fullName>
    </recommendedName>
    <alternativeName>
        <fullName>BHLH transcription factor gamma</fullName>
        <shortName>bHLH gamma</shortName>
    </alternativeName>
    <alternativeName>
        <fullName>Basic helix-loop-helix protein 155</fullName>
        <shortName>AtbHLH155</shortName>
        <shortName>bHLH 155</shortName>
    </alternativeName>
    <alternativeName>
        <fullName>LONESOME HIGHWAY-like protein 3</fullName>
    </alternativeName>
    <alternativeName>
        <fullName>bHLH transcription factor bHLH155</fullName>
    </alternativeName>
</protein>
<dbReference type="EMBL" id="AJ576042">
    <property type="protein sequence ID" value="CAE09169.1"/>
    <property type="molecule type" value="mRNA"/>
</dbReference>
<dbReference type="EMBL" id="AC006593">
    <property type="protein sequence ID" value="AAD20673.1"/>
    <property type="molecule type" value="Genomic_DNA"/>
</dbReference>
<dbReference type="EMBL" id="CP002685">
    <property type="protein sequence ID" value="AEC08518.1"/>
    <property type="molecule type" value="Genomic_DNA"/>
</dbReference>
<dbReference type="EMBL" id="CP002685">
    <property type="protein sequence ID" value="AEC08519.1"/>
    <property type="molecule type" value="Genomic_DNA"/>
</dbReference>
<dbReference type="EMBL" id="CP002685">
    <property type="protein sequence ID" value="AEC08520.1"/>
    <property type="molecule type" value="Genomic_DNA"/>
</dbReference>
<dbReference type="EMBL" id="AY129831">
    <property type="protein sequence ID" value="AAM97767.1"/>
    <property type="molecule type" value="mRNA"/>
</dbReference>
<dbReference type="EMBL" id="AY231425">
    <property type="protein sequence ID" value="AAO86853.1"/>
    <property type="molecule type" value="mRNA"/>
</dbReference>
<dbReference type="EMBL" id="AY954808">
    <property type="protein sequence ID" value="AAX55134.1"/>
    <property type="molecule type" value="mRNA"/>
</dbReference>
<dbReference type="EMBL" id="AK221935">
    <property type="protein sequence ID" value="BAD94375.1"/>
    <property type="status" value="ALT_INIT"/>
    <property type="molecule type" value="mRNA"/>
</dbReference>
<dbReference type="PIR" id="G84718">
    <property type="entry name" value="G84718"/>
</dbReference>
<dbReference type="RefSeq" id="NP_001031453.1">
    <molecule id="Q58G01-2"/>
    <property type="nucleotide sequence ID" value="NM_001036376.1"/>
</dbReference>
<dbReference type="RefSeq" id="NP_001031454.1">
    <molecule id="Q58G01-3"/>
    <property type="nucleotide sequence ID" value="NM_001036377.1"/>
</dbReference>
<dbReference type="RefSeq" id="NP_180686.2">
    <molecule id="Q58G01-1"/>
    <property type="nucleotide sequence ID" value="NM_128684.5"/>
</dbReference>
<dbReference type="SMR" id="Q58G01"/>
<dbReference type="BioGRID" id="3033">
    <property type="interactions" value="33"/>
</dbReference>
<dbReference type="FunCoup" id="Q58G01">
    <property type="interactions" value="649"/>
</dbReference>
<dbReference type="IntAct" id="Q58G01">
    <property type="interactions" value="36"/>
</dbReference>
<dbReference type="STRING" id="3702.Q58G01"/>
<dbReference type="PaxDb" id="3702-AT2G31280.3"/>
<dbReference type="ProteomicsDB" id="238493">
    <molecule id="Q58G01-1"/>
</dbReference>
<dbReference type="EnsemblPlants" id="AT2G31280.1">
    <molecule id="Q58G01-1"/>
    <property type="protein sequence ID" value="AT2G31280.1"/>
    <property type="gene ID" value="AT2G31280"/>
</dbReference>
<dbReference type="EnsemblPlants" id="AT2G31280.2">
    <molecule id="Q58G01-2"/>
    <property type="protein sequence ID" value="AT2G31280.2"/>
    <property type="gene ID" value="AT2G31280"/>
</dbReference>
<dbReference type="EnsemblPlants" id="AT2G31280.3">
    <molecule id="Q58G01-3"/>
    <property type="protein sequence ID" value="AT2G31280.3"/>
    <property type="gene ID" value="AT2G31280"/>
</dbReference>
<dbReference type="GeneID" id="817685"/>
<dbReference type="Gramene" id="AT2G31280.1">
    <molecule id="Q58G01-1"/>
    <property type="protein sequence ID" value="AT2G31280.1"/>
    <property type="gene ID" value="AT2G31280"/>
</dbReference>
<dbReference type="Gramene" id="AT2G31280.2">
    <molecule id="Q58G01-2"/>
    <property type="protein sequence ID" value="AT2G31280.2"/>
    <property type="gene ID" value="AT2G31280"/>
</dbReference>
<dbReference type="Gramene" id="AT2G31280.3">
    <molecule id="Q58G01-3"/>
    <property type="protein sequence ID" value="AT2G31280.3"/>
    <property type="gene ID" value="AT2G31280"/>
</dbReference>
<dbReference type="KEGG" id="ath:AT2G31280"/>
<dbReference type="Araport" id="AT2G31280"/>
<dbReference type="TAIR" id="AT2G31280">
    <property type="gene designation" value="CPUORF7"/>
</dbReference>
<dbReference type="eggNOG" id="ENOG502QSH7">
    <property type="taxonomic scope" value="Eukaryota"/>
</dbReference>
<dbReference type="InParanoid" id="Q58G01"/>
<dbReference type="OMA" id="EMMCEEC"/>
<dbReference type="PhylomeDB" id="Q58G01"/>
<dbReference type="PRO" id="PR:Q58G01"/>
<dbReference type="Proteomes" id="UP000006548">
    <property type="component" value="Chromosome 2"/>
</dbReference>
<dbReference type="ExpressionAtlas" id="Q58G01">
    <property type="expression patterns" value="baseline and differential"/>
</dbReference>
<dbReference type="GO" id="GO:0005634">
    <property type="term" value="C:nucleus"/>
    <property type="evidence" value="ECO:0000250"/>
    <property type="project" value="UniProtKB"/>
</dbReference>
<dbReference type="GO" id="GO:0003677">
    <property type="term" value="F:DNA binding"/>
    <property type="evidence" value="ECO:0007669"/>
    <property type="project" value="UniProtKB-KW"/>
</dbReference>
<dbReference type="GO" id="GO:0003700">
    <property type="term" value="F:DNA-binding transcription factor activity"/>
    <property type="evidence" value="ECO:0000250"/>
    <property type="project" value="TAIR"/>
</dbReference>
<dbReference type="GO" id="GO:0046983">
    <property type="term" value="F:protein dimerization activity"/>
    <property type="evidence" value="ECO:0007669"/>
    <property type="project" value="InterPro"/>
</dbReference>
<dbReference type="GO" id="GO:0006355">
    <property type="term" value="P:regulation of DNA-templated transcription"/>
    <property type="evidence" value="ECO:0000304"/>
    <property type="project" value="TAIR"/>
</dbReference>
<dbReference type="GO" id="GO:0048364">
    <property type="term" value="P:root development"/>
    <property type="evidence" value="ECO:0000250"/>
    <property type="project" value="UniProtKB"/>
</dbReference>
<dbReference type="CDD" id="cd18915">
    <property type="entry name" value="bHLH_AtLHW_like"/>
    <property type="match status" value="1"/>
</dbReference>
<dbReference type="InterPro" id="IPR011598">
    <property type="entry name" value="bHLH_dom"/>
</dbReference>
<dbReference type="InterPro" id="IPR036638">
    <property type="entry name" value="HLH_DNA-bd_sf"/>
</dbReference>
<dbReference type="InterPro" id="IPR043561">
    <property type="entry name" value="LHW-like"/>
</dbReference>
<dbReference type="InterPro" id="IPR025610">
    <property type="entry name" value="MYC/MYB_N"/>
</dbReference>
<dbReference type="PANTHER" id="PTHR46196">
    <property type="entry name" value="TRANSCRIPTION FACTOR BHLH155-LIKE ISOFORM X1-RELATED"/>
    <property type="match status" value="1"/>
</dbReference>
<dbReference type="PANTHER" id="PTHR46196:SF1">
    <property type="entry name" value="TRANSCRIPTION FACTOR EMB1444-RELATED"/>
    <property type="match status" value="1"/>
</dbReference>
<dbReference type="Pfam" id="PF14215">
    <property type="entry name" value="bHLH-MYC_N"/>
    <property type="match status" value="2"/>
</dbReference>
<dbReference type="Pfam" id="PF23176">
    <property type="entry name" value="bHLH_LHW"/>
    <property type="match status" value="1"/>
</dbReference>
<dbReference type="SUPFAM" id="SSF47459">
    <property type="entry name" value="HLH, helix-loop-helix DNA-binding domain"/>
    <property type="match status" value="1"/>
</dbReference>
<dbReference type="PROSITE" id="PS50888">
    <property type="entry name" value="BHLH"/>
    <property type="match status" value="1"/>
</dbReference>